<reference key="1">
    <citation type="journal article" date="2005" name="Genome Res.">
        <title>Complete genome sequence of the hyperthermophilic archaeon Thermococcus kodakaraensis KOD1 and comparison with Pyrococcus genomes.</title>
        <authorList>
            <person name="Fukui T."/>
            <person name="Atomi H."/>
            <person name="Kanai T."/>
            <person name="Matsumi R."/>
            <person name="Fujiwara S."/>
            <person name="Imanaka T."/>
        </authorList>
    </citation>
    <scope>NUCLEOTIDE SEQUENCE [LARGE SCALE GENOMIC DNA]</scope>
    <source>
        <strain>ATCC BAA-918 / JCM 12380 / KOD1</strain>
    </source>
</reference>
<sequence length="131" mass="14274">MGDYVVVLEAPIIVKDVETSEDAINVAVSKVTKALNKEKLDFVRVEIGYSQCPVCGAHFESAFVIGSVGLVGMYLTLKVYNAQSIEHAERIAKAVVGKALKKVPLKVFEIRELEHDGENGIEAEELNGEDV</sequence>
<dbReference type="EMBL" id="AP006878">
    <property type="protein sequence ID" value="BAD85383.1"/>
    <property type="molecule type" value="Genomic_DNA"/>
</dbReference>
<dbReference type="RefSeq" id="WP_011250145.1">
    <property type="nucleotide sequence ID" value="NC_006624.1"/>
</dbReference>
<dbReference type="FunCoup" id="Q5JGF0">
    <property type="interactions" value="1"/>
</dbReference>
<dbReference type="STRING" id="69014.TK1194"/>
<dbReference type="EnsemblBacteria" id="BAD85383">
    <property type="protein sequence ID" value="BAD85383"/>
    <property type="gene ID" value="TK1194"/>
</dbReference>
<dbReference type="GeneID" id="78447710"/>
<dbReference type="KEGG" id="tko:TK1194"/>
<dbReference type="PATRIC" id="fig|69014.16.peg.1169"/>
<dbReference type="eggNOG" id="arCOG02119">
    <property type="taxonomic scope" value="Archaea"/>
</dbReference>
<dbReference type="HOGENOM" id="CLU_138334_0_0_2"/>
<dbReference type="InParanoid" id="Q5JGF0"/>
<dbReference type="OrthoDB" id="63517at2157"/>
<dbReference type="PhylomeDB" id="Q5JGF0"/>
<dbReference type="Proteomes" id="UP000000536">
    <property type="component" value="Chromosome"/>
</dbReference>
<dbReference type="HAMAP" id="MF_01223">
    <property type="entry name" value="UPF0212"/>
    <property type="match status" value="1"/>
</dbReference>
<dbReference type="InterPro" id="IPR007564">
    <property type="entry name" value="UPF0212"/>
</dbReference>
<dbReference type="NCBIfam" id="NF003035">
    <property type="entry name" value="PRK03922.1"/>
    <property type="match status" value="1"/>
</dbReference>
<dbReference type="PANTHER" id="PTHR42199">
    <property type="entry name" value="UPF0212 PROTEIN MJ0068"/>
    <property type="match status" value="1"/>
</dbReference>
<dbReference type="PANTHER" id="PTHR42199:SF1">
    <property type="entry name" value="UPF0212 PROTEIN TK1194"/>
    <property type="match status" value="1"/>
</dbReference>
<dbReference type="Pfam" id="PF04475">
    <property type="entry name" value="DUF555"/>
    <property type="match status" value="1"/>
</dbReference>
<dbReference type="PIRSF" id="PIRSF016934">
    <property type="entry name" value="UCP016934"/>
    <property type="match status" value="1"/>
</dbReference>
<evidence type="ECO:0000255" key="1">
    <source>
        <dbReference type="HAMAP-Rule" id="MF_01223"/>
    </source>
</evidence>
<name>Y1194_THEKO</name>
<feature type="chain" id="PRO_0000068283" description="UPF0212 protein TK1194">
    <location>
        <begin position="1"/>
        <end position="131"/>
    </location>
</feature>
<accession>Q5JGF0</accession>
<proteinExistence type="inferred from homology"/>
<gene>
    <name type="ordered locus">TK1194</name>
</gene>
<protein>
    <recommendedName>
        <fullName evidence="1">UPF0212 protein TK1194</fullName>
    </recommendedName>
</protein>
<comment type="similarity">
    <text evidence="1">Belongs to the UPF0212 family.</text>
</comment>
<organism>
    <name type="scientific">Thermococcus kodakarensis (strain ATCC BAA-918 / JCM 12380 / KOD1)</name>
    <name type="common">Pyrococcus kodakaraensis (strain KOD1)</name>
    <dbReference type="NCBI Taxonomy" id="69014"/>
    <lineage>
        <taxon>Archaea</taxon>
        <taxon>Methanobacteriati</taxon>
        <taxon>Methanobacteriota</taxon>
        <taxon>Thermococci</taxon>
        <taxon>Thermococcales</taxon>
        <taxon>Thermococcaceae</taxon>
        <taxon>Thermococcus</taxon>
    </lineage>
</organism>
<keyword id="KW-1185">Reference proteome</keyword>